<keyword id="KW-0067">ATP-binding</keyword>
<keyword id="KW-0143">Chaperone</keyword>
<keyword id="KW-0547">Nucleotide-binding</keyword>
<sequence>MAKILGIDLGTTNSCVAVMEGGEAVVIPNAEGSRTTPSVVGFSKKGEKLVGQVAKRQAISNPDNTVYSIKRHMGEANYKVTLNGKDYTPQEISAMILQKLKADAEAYLGETIKQAVITVPAYFNDSQRQATKDAGAIAGLEVLRIINEPTAASLAYGLDKGDIDQKILVYDLGGGTFDVSILELGGGVFEVKSTSGDTHLGGDDFDQRVIDYLLAEFKKSEGIDLSKDKAVLQRLKDAAEKAKIELSGVANTNINLPFLTVGTDGEPKHMDIDLTRAQFQKMTEDLLEKTLVSMRRALSDAKLTPNDLDKVILVGGATRMPAVVELVENFTGKKPYKNINPDEAVAIGAAIQAGVLGGEVKDVLLLDVTPLTLGIETLGGIATPLIQRNTTIPTKKSQIFSTAADNQPSVEIHVLQGERGIASENKTLGRFILDGIPPAPRGIPQIEVTFDIDANGILHVSAKDLGTGKQQSISIQKPGGLSDDEIERMVKDAEMHAEEDRKRKEEVEIRNNAEALINAAEKTIKEAGDLATEDQKSKVNAAIEDLKKALEGKDAEDIKAKTEALQESVYPISTAMYQKAQQAQQAAGGEGGAAGTDARGPDETVVDADYEVVDDEKRK</sequence>
<proteinExistence type="inferred from homology"/>
<evidence type="ECO:0000250" key="1"/>
<evidence type="ECO:0000256" key="2">
    <source>
        <dbReference type="SAM" id="MobiDB-lite"/>
    </source>
</evidence>
<evidence type="ECO:0000305" key="3"/>
<gene>
    <name type="primary">dnaK</name>
</gene>
<accession>P0CW12</accession>
<accession>P27094</accession>
<feature type="chain" id="PRO_0000078598" description="Chaperone protein DnaK">
    <location>
        <begin position="1"/>
        <end position="619"/>
    </location>
</feature>
<feature type="region of interest" description="Disordered" evidence="2">
    <location>
        <begin position="580"/>
        <end position="619"/>
    </location>
</feature>
<feature type="compositionally biased region" description="Acidic residues" evidence="2">
    <location>
        <begin position="604"/>
        <end position="619"/>
    </location>
</feature>
<name>DNAK_METMZ</name>
<organism>
    <name type="scientific">Methanosarcina mazei</name>
    <name type="common">Methanosarcina frisia</name>
    <dbReference type="NCBI Taxonomy" id="2209"/>
    <lineage>
        <taxon>Archaea</taxon>
        <taxon>Methanobacteriati</taxon>
        <taxon>Methanobacteriota</taxon>
        <taxon>Stenosarchaea group</taxon>
        <taxon>Methanomicrobia</taxon>
        <taxon>Methanosarcinales</taxon>
        <taxon>Methanosarcinaceae</taxon>
        <taxon>Methanosarcina</taxon>
    </lineage>
</organism>
<comment type="function">
    <text evidence="1">Acts as a chaperone.</text>
</comment>
<comment type="similarity">
    <text evidence="3">Belongs to the heat shock protein 70 family.</text>
</comment>
<reference key="1">
    <citation type="journal article" date="1991" name="Gene">
        <title>A dnaK homolog in the archaebacterium Methanosarcina mazei S6.</title>
        <authorList>
            <person name="Macario A.J.L."/>
            <person name="Dugan C.B."/>
            <person name="Conway de Macario E."/>
        </authorList>
    </citation>
    <scope>NUCLEOTIDE SEQUENCE [GENOMIC DNA]</scope>
    <source>
        <strain>S-6</strain>
    </source>
</reference>
<protein>
    <recommendedName>
        <fullName>Chaperone protein DnaK</fullName>
    </recommendedName>
    <alternativeName>
        <fullName>HSP70</fullName>
    </alternativeName>
    <alternativeName>
        <fullName>Heat shock 70 kDa protein</fullName>
    </alternativeName>
    <alternativeName>
        <fullName>Heat shock protein 70</fullName>
    </alternativeName>
</protein>
<dbReference type="EMBL" id="X60265">
    <property type="protein sequence ID" value="CAA42812.1"/>
    <property type="molecule type" value="Genomic_DNA"/>
</dbReference>
<dbReference type="PIR" id="JS0656">
    <property type="entry name" value="JS0656"/>
</dbReference>
<dbReference type="RefSeq" id="WP_011034423.1">
    <property type="nucleotide sequence ID" value="NZ_JJQU01000256.1"/>
</dbReference>
<dbReference type="SMR" id="P0CW12"/>
<dbReference type="GeneID" id="82161582"/>
<dbReference type="OMA" id="MGTDWKI"/>
<dbReference type="OrthoDB" id="9944at2157"/>
<dbReference type="GO" id="GO:0005524">
    <property type="term" value="F:ATP binding"/>
    <property type="evidence" value="ECO:0007669"/>
    <property type="project" value="UniProtKB-UniRule"/>
</dbReference>
<dbReference type="GO" id="GO:0140662">
    <property type="term" value="F:ATP-dependent protein folding chaperone"/>
    <property type="evidence" value="ECO:0007669"/>
    <property type="project" value="InterPro"/>
</dbReference>
<dbReference type="GO" id="GO:0051082">
    <property type="term" value="F:unfolded protein binding"/>
    <property type="evidence" value="ECO:0007669"/>
    <property type="project" value="InterPro"/>
</dbReference>
<dbReference type="CDD" id="cd10234">
    <property type="entry name" value="ASKHA_NBD_HSP70_DnaK-like"/>
    <property type="match status" value="1"/>
</dbReference>
<dbReference type="FunFam" id="1.20.1270.10:FF:000059">
    <property type="entry name" value="Chaperone protein DnaK"/>
    <property type="match status" value="1"/>
</dbReference>
<dbReference type="FunFam" id="2.60.34.10:FF:000014">
    <property type="entry name" value="Chaperone protein DnaK HSP70"/>
    <property type="match status" value="1"/>
</dbReference>
<dbReference type="FunFam" id="3.30.420.40:FF:000071">
    <property type="entry name" value="Molecular chaperone DnaK"/>
    <property type="match status" value="1"/>
</dbReference>
<dbReference type="FunFam" id="3.90.640.10:FF:000003">
    <property type="entry name" value="Molecular chaperone DnaK"/>
    <property type="match status" value="1"/>
</dbReference>
<dbReference type="Gene3D" id="1.20.1270.10">
    <property type="match status" value="1"/>
</dbReference>
<dbReference type="Gene3D" id="3.30.420.40">
    <property type="match status" value="2"/>
</dbReference>
<dbReference type="Gene3D" id="3.90.640.10">
    <property type="entry name" value="Actin, Chain A, domain 4"/>
    <property type="match status" value="1"/>
</dbReference>
<dbReference type="Gene3D" id="2.60.34.10">
    <property type="entry name" value="Substrate Binding Domain Of DNAk, Chain A, domain 1"/>
    <property type="match status" value="1"/>
</dbReference>
<dbReference type="HAMAP" id="MF_00332">
    <property type="entry name" value="DnaK"/>
    <property type="match status" value="1"/>
</dbReference>
<dbReference type="InterPro" id="IPR043129">
    <property type="entry name" value="ATPase_NBD"/>
</dbReference>
<dbReference type="InterPro" id="IPR012725">
    <property type="entry name" value="Chaperone_DnaK"/>
</dbReference>
<dbReference type="InterPro" id="IPR018181">
    <property type="entry name" value="Heat_shock_70_CS"/>
</dbReference>
<dbReference type="InterPro" id="IPR029048">
    <property type="entry name" value="HSP70_C_sf"/>
</dbReference>
<dbReference type="InterPro" id="IPR029047">
    <property type="entry name" value="HSP70_peptide-bd_sf"/>
</dbReference>
<dbReference type="InterPro" id="IPR013126">
    <property type="entry name" value="Hsp_70_fam"/>
</dbReference>
<dbReference type="NCBIfam" id="NF001413">
    <property type="entry name" value="PRK00290.1"/>
    <property type="match status" value="1"/>
</dbReference>
<dbReference type="NCBIfam" id="TIGR02350">
    <property type="entry name" value="prok_dnaK"/>
    <property type="match status" value="1"/>
</dbReference>
<dbReference type="PANTHER" id="PTHR19375">
    <property type="entry name" value="HEAT SHOCK PROTEIN 70KDA"/>
    <property type="match status" value="1"/>
</dbReference>
<dbReference type="Pfam" id="PF00012">
    <property type="entry name" value="HSP70"/>
    <property type="match status" value="1"/>
</dbReference>
<dbReference type="PRINTS" id="PR00301">
    <property type="entry name" value="HEATSHOCK70"/>
</dbReference>
<dbReference type="SUPFAM" id="SSF53067">
    <property type="entry name" value="Actin-like ATPase domain"/>
    <property type="match status" value="2"/>
</dbReference>
<dbReference type="SUPFAM" id="SSF100934">
    <property type="entry name" value="Heat shock protein 70kD (HSP70), C-terminal subdomain"/>
    <property type="match status" value="1"/>
</dbReference>
<dbReference type="SUPFAM" id="SSF100920">
    <property type="entry name" value="Heat shock protein 70kD (HSP70), peptide-binding domain"/>
    <property type="match status" value="1"/>
</dbReference>
<dbReference type="PROSITE" id="PS00297">
    <property type="entry name" value="HSP70_1"/>
    <property type="match status" value="1"/>
</dbReference>
<dbReference type="PROSITE" id="PS00329">
    <property type="entry name" value="HSP70_2"/>
    <property type="match status" value="1"/>
</dbReference>
<dbReference type="PROSITE" id="PS01036">
    <property type="entry name" value="HSP70_3"/>
    <property type="match status" value="1"/>
</dbReference>